<organism>
    <name type="scientific">Mus musculus</name>
    <name type="common">Mouse</name>
    <dbReference type="NCBI Taxonomy" id="10090"/>
    <lineage>
        <taxon>Eukaryota</taxon>
        <taxon>Metazoa</taxon>
        <taxon>Chordata</taxon>
        <taxon>Craniata</taxon>
        <taxon>Vertebrata</taxon>
        <taxon>Euteleostomi</taxon>
        <taxon>Mammalia</taxon>
        <taxon>Eutheria</taxon>
        <taxon>Euarchontoglires</taxon>
        <taxon>Glires</taxon>
        <taxon>Rodentia</taxon>
        <taxon>Myomorpha</taxon>
        <taxon>Muroidea</taxon>
        <taxon>Muridae</taxon>
        <taxon>Murinae</taxon>
        <taxon>Mus</taxon>
        <taxon>Mus</taxon>
    </lineage>
</organism>
<evidence type="ECO:0000250" key="1">
    <source>
        <dbReference type="UniProtKB" id="P0C0S5"/>
    </source>
</evidence>
<evidence type="ECO:0000250" key="2">
    <source>
        <dbReference type="UniProtKB" id="P0C0S8"/>
    </source>
</evidence>
<evidence type="ECO:0000250" key="3">
    <source>
        <dbReference type="UniProtKB" id="P0C169"/>
    </source>
</evidence>
<evidence type="ECO:0000250" key="4">
    <source>
        <dbReference type="UniProtKB" id="Q93077"/>
    </source>
</evidence>
<evidence type="ECO:0000256" key="5">
    <source>
        <dbReference type="SAM" id="MobiDB-lite"/>
    </source>
</evidence>
<evidence type="ECO:0000269" key="6">
    <source>
    </source>
</evidence>
<evidence type="ECO:0000269" key="7">
    <source>
    </source>
</evidence>
<evidence type="ECO:0000269" key="8">
    <source>
    </source>
</evidence>
<evidence type="ECO:0000269" key="9">
    <source>
    </source>
</evidence>
<evidence type="ECO:0000269" key="10">
    <source>
    </source>
</evidence>
<evidence type="ECO:0000269" key="11">
    <source>
    </source>
</evidence>
<evidence type="ECO:0000269" key="12">
    <source>
    </source>
</evidence>
<evidence type="ECO:0000269" key="13">
    <source>
    </source>
</evidence>
<evidence type="ECO:0000305" key="14"/>
<evidence type="ECO:0000312" key="15">
    <source>
        <dbReference type="EMBL" id="BAC28337.1"/>
    </source>
</evidence>
<evidence type="ECO:0000312" key="16">
    <source>
        <dbReference type="MGI" id="MGI:2448287"/>
    </source>
</evidence>
<dbReference type="EMBL" id="AY158919">
    <property type="protein sequence ID" value="AAO06229.1"/>
    <property type="molecule type" value="Genomic_DNA"/>
</dbReference>
<dbReference type="EMBL" id="AK033518">
    <property type="protein sequence ID" value="BAC28337.1"/>
    <property type="molecule type" value="mRNA"/>
</dbReference>
<dbReference type="EMBL" id="AL592149">
    <property type="protein sequence ID" value="CAI24893.1"/>
    <property type="molecule type" value="Genomic_DNA"/>
</dbReference>
<dbReference type="CCDS" id="CCDS26356.1"/>
<dbReference type="RefSeq" id="NP_835496.1">
    <property type="nucleotide sequence ID" value="NM_178189.5"/>
</dbReference>
<dbReference type="SMR" id="C0HKE2"/>
<dbReference type="ComplexPortal" id="CPX-5705">
    <property type="entry name" value="CENP-A nucleosome complex"/>
</dbReference>
<dbReference type="ComplexPortal" id="CPX-5712">
    <property type="entry name" value="Nucleosome, variant H3.1-H2A.2-H2B.1"/>
</dbReference>
<dbReference type="ComplexPortal" id="CPX-5713">
    <property type="entry name" value="Nucleosome, variant H3.2-H2A.2-H2B.1"/>
</dbReference>
<dbReference type="ComplexPortal" id="CPX-5714">
    <property type="entry name" value="Nucleosome, variant H3.g-H2A.2-H2B.1"/>
</dbReference>
<dbReference type="FunCoup" id="C0HKE2">
    <property type="interactions" value="882"/>
</dbReference>
<dbReference type="IntAct" id="C0HKE2">
    <property type="interactions" value="2"/>
</dbReference>
<dbReference type="MINT" id="C0HKE2"/>
<dbReference type="iPTMnet" id="C0HKE2"/>
<dbReference type="jPOST" id="C0HKE2"/>
<dbReference type="Pumba" id="C0HKE2"/>
<dbReference type="Antibodypedia" id="72464">
    <property type="antibodies" value="208 antibodies from 18 providers"/>
</dbReference>
<dbReference type="DNASU" id="319172"/>
<dbReference type="Ensembl" id="ENSMUST00000070124.5">
    <property type="protein sequence ID" value="ENSMUSP00000088285.3"/>
    <property type="gene ID" value="ENSMUSG00000071516.3"/>
</dbReference>
<dbReference type="Ensembl" id="ENSMUST00000078369.3">
    <property type="protein sequence ID" value="ENSMUSP00000077477.2"/>
    <property type="gene ID" value="ENSMUSG00000061615.3"/>
</dbReference>
<dbReference type="Ensembl" id="ENSMUST00000081342.7">
    <property type="protein sequence ID" value="ENSMUSP00000080088.6"/>
    <property type="gene ID" value="ENSMUSG00000094777.3"/>
</dbReference>
<dbReference type="Ensembl" id="ENSMUST00000090776.7">
    <property type="protein sequence ID" value="ENSMUSP00000088281.5"/>
    <property type="gene ID" value="ENSMUSG00000071478.7"/>
</dbReference>
<dbReference type="Ensembl" id="ENSMUST00000091741.6">
    <property type="protein sequence ID" value="ENSMUSP00000089335.5"/>
    <property type="gene ID" value="ENSMUSG00000069301.6"/>
</dbReference>
<dbReference type="Ensembl" id="ENSMUST00000091745.6">
    <property type="protein sequence ID" value="ENSMUSP00000089339.6"/>
    <property type="gene ID" value="ENSMUSG00000094248.2"/>
</dbReference>
<dbReference type="Ensembl" id="ENSMUST00000091751.3">
    <property type="protein sequence ID" value="ENSMUSP00000089345.3"/>
    <property type="gene ID" value="ENSMUSG00000069309.3"/>
</dbReference>
<dbReference type="Ensembl" id="ENSMUST00000102969.6">
    <property type="protein sequence ID" value="ENSMUSP00000100034.4"/>
    <property type="gene ID" value="ENSMUSG00000069272.7"/>
</dbReference>
<dbReference type="Ensembl" id="ENSMUST00000171127.4">
    <property type="protein sequence ID" value="ENSMUSP00000127684.2"/>
    <property type="gene ID" value="ENSMUSG00000069270.7"/>
</dbReference>
<dbReference type="GeneID" id="319164"/>
<dbReference type="KEGG" id="mmu:319164"/>
<dbReference type="KEGG" id="mmu:319165"/>
<dbReference type="KEGG" id="mmu:319166"/>
<dbReference type="KEGG" id="mmu:319167"/>
<dbReference type="KEGG" id="mmu:319170"/>
<dbReference type="KEGG" id="mmu:319171"/>
<dbReference type="KEGG" id="mmu:319172"/>
<dbReference type="KEGG" id="mmu:319191"/>
<dbReference type="KEGG" id="mmu:665433"/>
<dbReference type="AGR" id="MGI:2448287"/>
<dbReference type="CTD" id="3012"/>
<dbReference type="CTD" id="3013"/>
<dbReference type="CTD" id="319170"/>
<dbReference type="CTD" id="319171"/>
<dbReference type="CTD" id="665433"/>
<dbReference type="CTD" id="8329"/>
<dbReference type="CTD" id="8334"/>
<dbReference type="CTD" id="8335"/>
<dbReference type="CTD" id="8969"/>
<dbReference type="MGI" id="MGI:2448287">
    <property type="gene designation" value="H2ac6"/>
</dbReference>
<dbReference type="VEuPathDB" id="HostDB:ENSMUSG00000061615"/>
<dbReference type="VEuPathDB" id="HostDB:ENSMUSG00000069270"/>
<dbReference type="VEuPathDB" id="HostDB:ENSMUSG00000069272"/>
<dbReference type="VEuPathDB" id="HostDB:ENSMUSG00000069301"/>
<dbReference type="VEuPathDB" id="HostDB:ENSMUSG00000069309"/>
<dbReference type="VEuPathDB" id="HostDB:ENSMUSG00000071478"/>
<dbReference type="VEuPathDB" id="HostDB:ENSMUSG00000071516"/>
<dbReference type="VEuPathDB" id="HostDB:ENSMUSG00000094248"/>
<dbReference type="VEuPathDB" id="HostDB:ENSMUSG00000094777"/>
<dbReference type="InParanoid" id="C0HKE2"/>
<dbReference type="OMA" id="TEDCRQT"/>
<dbReference type="OrthoDB" id="9610409at2759"/>
<dbReference type="Reactome" id="R-MMU-110330">
    <property type="pathway name" value="Recognition and association of DNA glycosylase with site containing an affected purine"/>
</dbReference>
<dbReference type="Reactome" id="R-MMU-110331">
    <property type="pathway name" value="Cleavage of the damaged purine"/>
</dbReference>
<dbReference type="Reactome" id="R-MMU-212300">
    <property type="pathway name" value="PRC2 methylates histones and DNA"/>
</dbReference>
<dbReference type="Reactome" id="R-MMU-2299718">
    <property type="pathway name" value="Condensation of Prophase Chromosomes"/>
</dbReference>
<dbReference type="Reactome" id="R-MMU-2559586">
    <property type="pathway name" value="DNA Damage/Telomere Stress Induced Senescence"/>
</dbReference>
<dbReference type="Reactome" id="R-MMU-3214815">
    <property type="pathway name" value="HDACs deacetylate histones"/>
</dbReference>
<dbReference type="Reactome" id="R-MMU-3214858">
    <property type="pathway name" value="RMTs methylate histone arginines"/>
</dbReference>
<dbReference type="Reactome" id="R-MMU-5689603">
    <property type="pathway name" value="UCH proteinases"/>
</dbReference>
<dbReference type="Reactome" id="R-MMU-5689880">
    <property type="pathway name" value="Ub-specific processing proteases"/>
</dbReference>
<dbReference type="Reactome" id="R-MMU-5689901">
    <property type="pathway name" value="Metalloprotease DUBs"/>
</dbReference>
<dbReference type="Reactome" id="R-MMU-606279">
    <property type="pathway name" value="Deposition of new CENPA-containing nucleosomes at the centromere"/>
</dbReference>
<dbReference type="Reactome" id="R-MMU-8936459">
    <property type="pathway name" value="RUNX1 regulates genes involved in megakaryocyte differentiation and platelet function"/>
</dbReference>
<dbReference type="Reactome" id="R-MMU-9670095">
    <property type="pathway name" value="Inhibition of DNA recombination at telomere"/>
</dbReference>
<dbReference type="Reactome" id="R-MMU-9841922">
    <property type="pathway name" value="MLL4 and MLL3 complexes regulate expression of PPARG target genes in adipogenesis and hepatic steatosis"/>
</dbReference>
<dbReference type="Reactome" id="R-MMU-9843940">
    <property type="pathway name" value="Regulation of endogenous retroelements by KRAB-ZFP proteins"/>
</dbReference>
<dbReference type="BioGRID-ORCS" id="319164">
    <property type="hits" value="12 hits in 61 CRISPR screens"/>
</dbReference>
<dbReference type="BioGRID-ORCS" id="319165">
    <property type="hits" value="11 hits in 41 CRISPR screens"/>
</dbReference>
<dbReference type="BioGRID-ORCS" id="319166">
    <property type="hits" value="13 hits in 57 CRISPR screens"/>
</dbReference>
<dbReference type="BioGRID-ORCS" id="319167">
    <property type="hits" value="12 hits in 44 CRISPR screens"/>
</dbReference>
<dbReference type="BioGRID-ORCS" id="319170">
    <property type="hits" value="14 hits in 59 CRISPR screens"/>
</dbReference>
<dbReference type="BioGRID-ORCS" id="319171">
    <property type="hits" value="14 hits in 43 CRISPR screens"/>
</dbReference>
<dbReference type="BioGRID-ORCS" id="319172">
    <property type="hits" value="9 hits in 57 CRISPR screens"/>
</dbReference>
<dbReference type="BioGRID-ORCS" id="319191">
    <property type="hits" value="10 hits in 58 CRISPR screens"/>
</dbReference>
<dbReference type="BioGRID-ORCS" id="665433">
    <property type="hits" value="10 hits in 42 CRISPR screens"/>
</dbReference>
<dbReference type="PRO" id="PR:C0HKE2"/>
<dbReference type="Proteomes" id="UP000000589">
    <property type="component" value="Chromosome 13"/>
</dbReference>
<dbReference type="RNAct" id="C0HKE2">
    <property type="molecule type" value="protein"/>
</dbReference>
<dbReference type="Bgee" id="ENSMUSG00000061615">
    <property type="expression patterns" value="Expressed in uterus and 49 other cell types or tissues"/>
</dbReference>
<dbReference type="ExpressionAtlas" id="C0HKE2">
    <property type="expression patterns" value="baseline and differential"/>
</dbReference>
<dbReference type="GO" id="GO:0000786">
    <property type="term" value="C:nucleosome"/>
    <property type="evidence" value="ECO:0007669"/>
    <property type="project" value="UniProtKB-KW"/>
</dbReference>
<dbReference type="GO" id="GO:0005634">
    <property type="term" value="C:nucleus"/>
    <property type="evidence" value="ECO:0007669"/>
    <property type="project" value="UniProtKB-SubCell"/>
</dbReference>
<dbReference type="GO" id="GO:0003677">
    <property type="term" value="F:DNA binding"/>
    <property type="evidence" value="ECO:0007669"/>
    <property type="project" value="UniProtKB-KW"/>
</dbReference>
<dbReference type="GO" id="GO:0046982">
    <property type="term" value="F:protein heterodimerization activity"/>
    <property type="evidence" value="ECO:0007669"/>
    <property type="project" value="InterPro"/>
</dbReference>
<dbReference type="GO" id="GO:0030527">
    <property type="term" value="F:structural constituent of chromatin"/>
    <property type="evidence" value="ECO:0007669"/>
    <property type="project" value="InterPro"/>
</dbReference>
<dbReference type="CDD" id="cd00074">
    <property type="entry name" value="HFD_H2A"/>
    <property type="match status" value="1"/>
</dbReference>
<dbReference type="FunFam" id="1.10.20.10:FF:000103">
    <property type="entry name" value="Histone H2A type 1"/>
    <property type="match status" value="1"/>
</dbReference>
<dbReference type="Gene3D" id="1.10.20.10">
    <property type="entry name" value="Histone, subunit A"/>
    <property type="match status" value="1"/>
</dbReference>
<dbReference type="InterPro" id="IPR009072">
    <property type="entry name" value="Histone-fold"/>
</dbReference>
<dbReference type="InterPro" id="IPR002119">
    <property type="entry name" value="Histone_H2A"/>
</dbReference>
<dbReference type="InterPro" id="IPR007125">
    <property type="entry name" value="Histone_H2A/H2B/H3"/>
</dbReference>
<dbReference type="InterPro" id="IPR032454">
    <property type="entry name" value="Histone_H2A_C"/>
</dbReference>
<dbReference type="InterPro" id="IPR032458">
    <property type="entry name" value="Histone_H2A_CS"/>
</dbReference>
<dbReference type="PANTHER" id="PTHR23430">
    <property type="entry name" value="HISTONE H2A"/>
    <property type="match status" value="1"/>
</dbReference>
<dbReference type="Pfam" id="PF00125">
    <property type="entry name" value="Histone"/>
    <property type="match status" value="1"/>
</dbReference>
<dbReference type="Pfam" id="PF16211">
    <property type="entry name" value="Histone_H2A_C"/>
    <property type="match status" value="1"/>
</dbReference>
<dbReference type="PRINTS" id="PR00620">
    <property type="entry name" value="HISTONEH2A"/>
</dbReference>
<dbReference type="SMART" id="SM00414">
    <property type="entry name" value="H2A"/>
    <property type="match status" value="1"/>
</dbReference>
<dbReference type="SUPFAM" id="SSF47113">
    <property type="entry name" value="Histone-fold"/>
    <property type="match status" value="1"/>
</dbReference>
<dbReference type="PROSITE" id="PS00046">
    <property type="entry name" value="HISTONE_H2A"/>
    <property type="match status" value="1"/>
</dbReference>
<sequence length="130" mass="14135">MSGRGKQGGKARAKAKTRSSRAGLQFPVGRVHRLLRKGNYSERVGAGAPVYLAAVLEYLTAEILELAGNAARDNKKTRIIPRHLQLAIRNDEELNKLLGRVTIAQGGVLPNIQAVLLPKKTESHHKAKGK</sequence>
<protein>
    <recommendedName>
        <fullName evidence="14">Histone H2A type 1-C</fullName>
    </recommendedName>
    <alternativeName>
        <fullName evidence="16">H2A-clustered histone 6</fullName>
    </alternativeName>
</protein>
<feature type="initiator methionine" description="Removed" evidence="3">
    <location>
        <position position="1"/>
    </location>
</feature>
<feature type="chain" id="PRO_0000439716" description="Histone H2A type 1-C">
    <location>
        <begin position="2"/>
        <end position="130"/>
    </location>
</feature>
<feature type="region of interest" description="Disordered" evidence="5">
    <location>
        <begin position="1"/>
        <end position="22"/>
    </location>
</feature>
<feature type="compositionally biased region" description="Basic residues" evidence="5">
    <location>
        <begin position="7"/>
        <end position="19"/>
    </location>
</feature>
<feature type="modified residue" description="N-acetylserine" evidence="13">
    <location>
        <position position="2"/>
    </location>
</feature>
<feature type="modified residue" description="Phosphoserine; by RPS6KA5" evidence="13">
    <location>
        <position position="2"/>
    </location>
</feature>
<feature type="modified residue" description="Citrulline; alternate" evidence="2">
    <location>
        <position position="4"/>
    </location>
</feature>
<feature type="modified residue" description="Symmetric dimethylarginine; by PRMT5; alternate" evidence="8">
    <location>
        <position position="4"/>
    </location>
</feature>
<feature type="modified residue" description="N6-(2-hydroxyisobutyryl)lysine; alternate" evidence="11">
    <location>
        <position position="6"/>
    </location>
</feature>
<feature type="modified residue" description="N6-(beta-hydroxybutyryl)lysine; alternate" evidence="12">
    <location>
        <position position="6"/>
    </location>
</feature>
<feature type="modified residue" description="N6-acetyllysine; alternate" evidence="13">
    <location>
        <position position="6"/>
    </location>
</feature>
<feature type="modified residue" description="N6-(2-hydroxyisobutyryl)lysine; alternate" evidence="11">
    <location>
        <position position="10"/>
    </location>
</feature>
<feature type="modified residue" description="N6-lactoyllysine; alternate" evidence="1">
    <location>
        <position position="10"/>
    </location>
</feature>
<feature type="modified residue" description="N6-succinyllysine; alternate" evidence="4">
    <location>
        <position position="10"/>
    </location>
</feature>
<feature type="modified residue" description="N6-(2-hydroxyisobutyryl)lysine; alternate" evidence="11">
    <location>
        <position position="37"/>
    </location>
</feature>
<feature type="modified residue" description="N6-(beta-hydroxybutyryl)lysine; alternate" evidence="12">
    <location>
        <position position="37"/>
    </location>
</feature>
<feature type="modified residue" description="N6-crotonyllysine; alternate" evidence="9">
    <location>
        <position position="37"/>
    </location>
</feature>
<feature type="modified residue" description="N6-(2-hydroxyisobutyryl)lysine" evidence="11">
    <location>
        <position position="75"/>
    </location>
</feature>
<feature type="modified residue" description="N6-(2-hydroxyisobutyryl)lysine" evidence="11">
    <location>
        <position position="76"/>
    </location>
</feature>
<feature type="modified residue" description="N6-(2-hydroxyisobutyryl)lysine; alternate" evidence="11">
    <location>
        <position position="96"/>
    </location>
</feature>
<feature type="modified residue" description="N6-glutaryllysine; alternate" evidence="2">
    <location>
        <position position="96"/>
    </location>
</feature>
<feature type="modified residue" description="N6-succinyllysine; alternate" evidence="4">
    <location>
        <position position="96"/>
    </location>
</feature>
<feature type="modified residue" description="N5-methylglutamine" evidence="10">
    <location>
        <position position="105"/>
    </location>
</feature>
<feature type="modified residue" description="N6-(2-hydroxyisobutyryl)lysine; alternate" evidence="11">
    <location>
        <position position="119"/>
    </location>
</feature>
<feature type="modified residue" description="N6-crotonyllysine; alternate" evidence="9">
    <location>
        <position position="119"/>
    </location>
</feature>
<feature type="modified residue" description="N6-glutaryllysine; alternate" evidence="2">
    <location>
        <position position="119"/>
    </location>
</feature>
<feature type="modified residue" description="N6-(beta-hydroxybutyryl)lysine; alternate" evidence="12">
    <location>
        <position position="120"/>
    </location>
</feature>
<feature type="modified residue" description="N6-crotonyllysine; alternate" evidence="2">
    <location>
        <position position="120"/>
    </location>
</feature>
<feature type="modified residue" description="N6-glutaryllysine; alternate" evidence="2">
    <location>
        <position position="120"/>
    </location>
</feature>
<feature type="modified residue" description="Phosphothreonine; by DCAF1" evidence="4">
    <location>
        <position position="121"/>
    </location>
</feature>
<feature type="modified residue" description="N6-(beta-hydroxybutyryl)lysine; alternate" evidence="12">
    <location>
        <position position="126"/>
    </location>
</feature>
<feature type="modified residue" description="N6-crotonyllysine; alternate" evidence="2">
    <location>
        <position position="126"/>
    </location>
</feature>
<feature type="modified residue" description="N6-glutaryllysine; alternate" evidence="2">
    <location>
        <position position="126"/>
    </location>
</feature>
<feature type="cross-link" description="Glycyl lysine isopeptide (Lys-Gly) (interchain with G-Cter in ubiquitin)" evidence="4">
    <location>
        <position position="14"/>
    </location>
</feature>
<feature type="cross-link" description="Glycyl lysine isopeptide (Lys-Gly) (interchain with G-Cter in ubiquitin)" evidence="4">
    <location>
        <position position="16"/>
    </location>
</feature>
<feature type="cross-link" description="Glycyl lysine isopeptide (Lys-Gly) (interchain with G-Cter in ubiquitin); alternate" evidence="6 7">
    <location>
        <position position="120"/>
    </location>
</feature>
<name>H2A1C_MOUSE</name>
<reference key="1">
    <citation type="journal article" date="2002" name="Genomics">
        <title>The human and mouse replication-dependent histone genes.</title>
        <authorList>
            <person name="Marzluff W.F."/>
            <person name="Gongidi P."/>
            <person name="Woods K.R."/>
            <person name="Jin J."/>
            <person name="Maltais L.J."/>
        </authorList>
    </citation>
    <scope>NUCLEOTIDE SEQUENCE [GENOMIC DNA]</scope>
</reference>
<reference key="2">
    <citation type="journal article" date="2005" name="Science">
        <title>The transcriptional landscape of the mammalian genome.</title>
        <authorList>
            <person name="Carninci P."/>
            <person name="Kasukawa T."/>
            <person name="Katayama S."/>
            <person name="Gough J."/>
            <person name="Frith M.C."/>
            <person name="Maeda N."/>
            <person name="Oyama R."/>
            <person name="Ravasi T."/>
            <person name="Lenhard B."/>
            <person name="Wells C."/>
            <person name="Kodzius R."/>
            <person name="Shimokawa K."/>
            <person name="Bajic V.B."/>
            <person name="Brenner S.E."/>
            <person name="Batalov S."/>
            <person name="Forrest A.R."/>
            <person name="Zavolan M."/>
            <person name="Davis M.J."/>
            <person name="Wilming L.G."/>
            <person name="Aidinis V."/>
            <person name="Allen J.E."/>
            <person name="Ambesi-Impiombato A."/>
            <person name="Apweiler R."/>
            <person name="Aturaliya R.N."/>
            <person name="Bailey T.L."/>
            <person name="Bansal M."/>
            <person name="Baxter L."/>
            <person name="Beisel K.W."/>
            <person name="Bersano T."/>
            <person name="Bono H."/>
            <person name="Chalk A.M."/>
            <person name="Chiu K.P."/>
            <person name="Choudhary V."/>
            <person name="Christoffels A."/>
            <person name="Clutterbuck D.R."/>
            <person name="Crowe M.L."/>
            <person name="Dalla E."/>
            <person name="Dalrymple B.P."/>
            <person name="de Bono B."/>
            <person name="Della Gatta G."/>
            <person name="di Bernardo D."/>
            <person name="Down T."/>
            <person name="Engstrom P."/>
            <person name="Fagiolini M."/>
            <person name="Faulkner G."/>
            <person name="Fletcher C.F."/>
            <person name="Fukushima T."/>
            <person name="Furuno M."/>
            <person name="Futaki S."/>
            <person name="Gariboldi M."/>
            <person name="Georgii-Hemming P."/>
            <person name="Gingeras T.R."/>
            <person name="Gojobori T."/>
            <person name="Green R.E."/>
            <person name="Gustincich S."/>
            <person name="Harbers M."/>
            <person name="Hayashi Y."/>
            <person name="Hensch T.K."/>
            <person name="Hirokawa N."/>
            <person name="Hill D."/>
            <person name="Huminiecki L."/>
            <person name="Iacono M."/>
            <person name="Ikeo K."/>
            <person name="Iwama A."/>
            <person name="Ishikawa T."/>
            <person name="Jakt M."/>
            <person name="Kanapin A."/>
            <person name="Katoh M."/>
            <person name="Kawasawa Y."/>
            <person name="Kelso J."/>
            <person name="Kitamura H."/>
            <person name="Kitano H."/>
            <person name="Kollias G."/>
            <person name="Krishnan S.P."/>
            <person name="Kruger A."/>
            <person name="Kummerfeld S.K."/>
            <person name="Kurochkin I.V."/>
            <person name="Lareau L.F."/>
            <person name="Lazarevic D."/>
            <person name="Lipovich L."/>
            <person name="Liu J."/>
            <person name="Liuni S."/>
            <person name="McWilliam S."/>
            <person name="Madan Babu M."/>
            <person name="Madera M."/>
            <person name="Marchionni L."/>
            <person name="Matsuda H."/>
            <person name="Matsuzawa S."/>
            <person name="Miki H."/>
            <person name="Mignone F."/>
            <person name="Miyake S."/>
            <person name="Morris K."/>
            <person name="Mottagui-Tabar S."/>
            <person name="Mulder N."/>
            <person name="Nakano N."/>
            <person name="Nakauchi H."/>
            <person name="Ng P."/>
            <person name="Nilsson R."/>
            <person name="Nishiguchi S."/>
            <person name="Nishikawa S."/>
            <person name="Nori F."/>
            <person name="Ohara O."/>
            <person name="Okazaki Y."/>
            <person name="Orlando V."/>
            <person name="Pang K.C."/>
            <person name="Pavan W.J."/>
            <person name="Pavesi G."/>
            <person name="Pesole G."/>
            <person name="Petrovsky N."/>
            <person name="Piazza S."/>
            <person name="Reed J."/>
            <person name="Reid J.F."/>
            <person name="Ring B.Z."/>
            <person name="Ringwald M."/>
            <person name="Rost B."/>
            <person name="Ruan Y."/>
            <person name="Salzberg S.L."/>
            <person name="Sandelin A."/>
            <person name="Schneider C."/>
            <person name="Schoenbach C."/>
            <person name="Sekiguchi K."/>
            <person name="Semple C.A."/>
            <person name="Seno S."/>
            <person name="Sessa L."/>
            <person name="Sheng Y."/>
            <person name="Shibata Y."/>
            <person name="Shimada H."/>
            <person name="Shimada K."/>
            <person name="Silva D."/>
            <person name="Sinclair B."/>
            <person name="Sperling S."/>
            <person name="Stupka E."/>
            <person name="Sugiura K."/>
            <person name="Sultana R."/>
            <person name="Takenaka Y."/>
            <person name="Taki K."/>
            <person name="Tammoja K."/>
            <person name="Tan S.L."/>
            <person name="Tang S."/>
            <person name="Taylor M.S."/>
            <person name="Tegner J."/>
            <person name="Teichmann S.A."/>
            <person name="Ueda H.R."/>
            <person name="van Nimwegen E."/>
            <person name="Verardo R."/>
            <person name="Wei C.L."/>
            <person name="Yagi K."/>
            <person name="Yamanishi H."/>
            <person name="Zabarovsky E."/>
            <person name="Zhu S."/>
            <person name="Zimmer A."/>
            <person name="Hide W."/>
            <person name="Bult C."/>
            <person name="Grimmond S.M."/>
            <person name="Teasdale R.D."/>
            <person name="Liu E.T."/>
            <person name="Brusic V."/>
            <person name="Quackenbush J."/>
            <person name="Wahlestedt C."/>
            <person name="Mattick J.S."/>
            <person name="Hume D.A."/>
            <person name="Kai C."/>
            <person name="Sasaki D."/>
            <person name="Tomaru Y."/>
            <person name="Fukuda S."/>
            <person name="Kanamori-Katayama M."/>
            <person name="Suzuki M."/>
            <person name="Aoki J."/>
            <person name="Arakawa T."/>
            <person name="Iida J."/>
            <person name="Imamura K."/>
            <person name="Itoh M."/>
            <person name="Kato T."/>
            <person name="Kawaji H."/>
            <person name="Kawagashira N."/>
            <person name="Kawashima T."/>
            <person name="Kojima M."/>
            <person name="Kondo S."/>
            <person name="Konno H."/>
            <person name="Nakano K."/>
            <person name="Ninomiya N."/>
            <person name="Nishio T."/>
            <person name="Okada M."/>
            <person name="Plessy C."/>
            <person name="Shibata K."/>
            <person name="Shiraki T."/>
            <person name="Suzuki S."/>
            <person name="Tagami M."/>
            <person name="Waki K."/>
            <person name="Watahiki A."/>
            <person name="Okamura-Oho Y."/>
            <person name="Suzuki H."/>
            <person name="Kawai J."/>
            <person name="Hayashizaki Y."/>
        </authorList>
    </citation>
    <scope>NUCLEOTIDE SEQUENCE [LARGE SCALE MRNA]</scope>
    <source>
        <strain evidence="15">C57BL/6J</strain>
        <tissue evidence="15">Colon</tissue>
    </source>
</reference>
<reference key="3">
    <citation type="journal article" date="2009" name="PLoS Biol.">
        <title>Lineage-specific biology revealed by a finished genome assembly of the mouse.</title>
        <authorList>
            <person name="Church D.M."/>
            <person name="Goodstadt L."/>
            <person name="Hillier L.W."/>
            <person name="Zody M.C."/>
            <person name="Goldstein S."/>
            <person name="She X."/>
            <person name="Bult C.J."/>
            <person name="Agarwala R."/>
            <person name="Cherry J.L."/>
            <person name="DiCuccio M."/>
            <person name="Hlavina W."/>
            <person name="Kapustin Y."/>
            <person name="Meric P."/>
            <person name="Maglott D."/>
            <person name="Birtle Z."/>
            <person name="Marques A.C."/>
            <person name="Graves T."/>
            <person name="Zhou S."/>
            <person name="Teague B."/>
            <person name="Potamousis K."/>
            <person name="Churas C."/>
            <person name="Place M."/>
            <person name="Herschleb J."/>
            <person name="Runnheim R."/>
            <person name="Forrest D."/>
            <person name="Amos-Landgraf J."/>
            <person name="Schwartz D.C."/>
            <person name="Cheng Z."/>
            <person name="Lindblad-Toh K."/>
            <person name="Eichler E.E."/>
            <person name="Ponting C.P."/>
        </authorList>
    </citation>
    <scope>NUCLEOTIDE SEQUENCE [LARGE SCALE GENOMIC DNA]</scope>
    <source>
        <strain>C57BL/6J</strain>
    </source>
</reference>
<reference key="4">
    <citation type="journal article" date="1981" name="J. Biol. Chem.">
        <title>Quantitative determination of histone modification. H2A acetylation and phosphorylation.</title>
        <authorList>
            <person name="Pantazis P."/>
            <person name="Bonner W.M."/>
        </authorList>
    </citation>
    <scope>PHOSPHORYLATION AT SER-2</scope>
    <scope>ACETYLATION AT SER-2 AND LYS-6</scope>
</reference>
<reference key="5">
    <citation type="journal article" date="2004" name="Dev. Cell">
        <title>Polycomb group proteins Ring1A/B link ubiquitylation of histone H2A to heritable gene silencing and X inactivation.</title>
        <authorList>
            <person name="de Napoles M."/>
            <person name="Mermoud J.E."/>
            <person name="Wakao R."/>
            <person name="Tang Y.A."/>
            <person name="Endoh M."/>
            <person name="Appanah R."/>
            <person name="Nesterova T.B."/>
            <person name="Silva J."/>
            <person name="Otte A.P."/>
            <person name="Vidal M."/>
            <person name="Koseki H."/>
            <person name="Brockdorff N."/>
        </authorList>
    </citation>
    <scope>UBIQUITINATION AT LYS-120</scope>
</reference>
<reference key="6">
    <citation type="journal article" date="2004" name="J. Biol. Chem.">
        <title>Ring1b-mediated H2A ubiquitination associates with inactive X chromosomes and is involved in initiation of X inactivation.</title>
        <authorList>
            <person name="Fang J."/>
            <person name="Chen T."/>
            <person name="Chadwick B."/>
            <person name="Li E."/>
            <person name="Zhang Y."/>
        </authorList>
    </citation>
    <scope>UBIQUITINATION AT LYS-120</scope>
</reference>
<reference key="7">
    <citation type="journal article" date="2006" name="Nat. Cell Biol.">
        <title>Blimp1 associates with Prmt5 and directs histone arginine methylation in mouse germ cells.</title>
        <authorList>
            <person name="Ancelin K."/>
            <person name="Lange U.C."/>
            <person name="Hajkova P."/>
            <person name="Schneider R."/>
            <person name="Bannister A.J."/>
            <person name="Kouzarides T."/>
            <person name="Surani M.A."/>
        </authorList>
    </citation>
    <scope>METHYLATION AT ARG-4</scope>
</reference>
<reference key="8">
    <citation type="journal article" date="2011" name="Cell">
        <title>Identification of 67 histone marks and histone lysine crotonylation as a new type of histone modification.</title>
        <authorList>
            <person name="Tan M."/>
            <person name="Luo H."/>
            <person name="Lee S."/>
            <person name="Jin F."/>
            <person name="Yang J.S."/>
            <person name="Montellier E."/>
            <person name="Buchou T."/>
            <person name="Cheng Z."/>
            <person name="Rousseaux S."/>
            <person name="Rajagopal N."/>
            <person name="Lu Z."/>
            <person name="Ye Z."/>
            <person name="Zhu Q."/>
            <person name="Wysocka J."/>
            <person name="Ye Y."/>
            <person name="Khochbin S."/>
            <person name="Ren B."/>
            <person name="Zhao Y."/>
        </authorList>
    </citation>
    <scope>CROTONYLATION AT LYS-37 AND LYS-119</scope>
</reference>
<reference key="9">
    <citation type="journal article" date="2014" name="Nat. Chem. Biol.">
        <title>Lysine 2-hydroxyisobutyrylation is a widely distributed active histone mark.</title>
        <authorList>
            <person name="Dai L."/>
            <person name="Peng C."/>
            <person name="Montellier E."/>
            <person name="Lu Z."/>
            <person name="Chen Y."/>
            <person name="Ishii H."/>
            <person name="Debernardi A."/>
            <person name="Buchou T."/>
            <person name="Rousseaux S."/>
            <person name="Jin F."/>
            <person name="Sabari B.R."/>
            <person name="Deng Z."/>
            <person name="Allis C.D."/>
            <person name="Ren B."/>
            <person name="Khochbin S."/>
            <person name="Zhao Y."/>
        </authorList>
    </citation>
    <scope>HYDROXYBUTYRYLATION AT LYS-6; LYS-10; LYS-37; LYS-75; LYS-76; LYS-96 AND LYS-119</scope>
</reference>
<reference key="10">
    <citation type="journal article" date="2014" name="Nature">
        <title>Glutamine methylation in histone H2A is an RNA-polymerase-I-dedicated modification.</title>
        <authorList>
            <person name="Tessarz P."/>
            <person name="Santos-Rosa H."/>
            <person name="Robson S.C."/>
            <person name="Sylvestersen K.B."/>
            <person name="Nelson C.J."/>
            <person name="Nielsen M.L."/>
            <person name="Kouzarides T."/>
        </authorList>
    </citation>
    <scope>METHYLATION AT GLN-105</scope>
</reference>
<reference key="11">
    <citation type="journal article" date="2016" name="Mol. Cell">
        <title>Metabolic regulation of gene expression by histone lysine beta-hydroxybutyrylation.</title>
        <authorList>
            <person name="Xie Z."/>
            <person name="Zhang D."/>
            <person name="Chung D."/>
            <person name="Tang Z."/>
            <person name="Huang H."/>
            <person name="Dai L."/>
            <person name="Qi S."/>
            <person name="Li J."/>
            <person name="Colak G."/>
            <person name="Chen Y."/>
            <person name="Xia C."/>
            <person name="Peng C."/>
            <person name="Ruan H."/>
            <person name="Kirkey M."/>
            <person name="Wang D."/>
            <person name="Jensen L.M."/>
            <person name="Kwon O.K."/>
            <person name="Lee S."/>
            <person name="Pletcher S.D."/>
            <person name="Tan M."/>
            <person name="Lombard D.B."/>
            <person name="White K.P."/>
            <person name="Zhao H."/>
            <person name="Li J."/>
            <person name="Roeder R.G."/>
            <person name="Yang X."/>
            <person name="Zhao Y."/>
        </authorList>
    </citation>
    <scope>HYDROXYBUTYRYLATION AT LYS-6; LYS-37; LYS-120 AND LYS-126</scope>
</reference>
<proteinExistence type="evidence at protein level"/>
<gene>
    <name evidence="16" type="primary">H2ac6</name>
    <name evidence="16" type="synonym">Hist1h2ac</name>
</gene>
<accession>C0HKE2</accession>
<accession>P10812</accession>
<accession>P22752</accession>
<accession>Q149U0</accession>
<accession>Q5SZZ2</accession>
<comment type="function">
    <text>Core component of nucleosome. Nucleosomes wrap and compact DNA into chromatin, limiting DNA accessibility to the cellular machineries which require DNA as a template. Histones thereby play a central role in transcription regulation, DNA repair, DNA replication and chromosomal stability. DNA accessibility is regulated via a complex set of post-translational modifications of histones, also called histone code, and nucleosome remodeling.</text>
</comment>
<comment type="subunit">
    <text>The nucleosome is a histone octamer containing two molecules each of H2A, H2B, H3 and H4 assembled in one H3-H4 heterotetramer and two H2A-H2B heterodimers. The octamer wraps approximately 147 bp of DNA.</text>
</comment>
<comment type="subcellular location">
    <subcellularLocation>
        <location>Nucleus</location>
    </subcellularLocation>
    <subcellularLocation>
        <location>Chromosome</location>
    </subcellularLocation>
</comment>
<comment type="PTM">
    <text evidence="2">Deiminated on Arg-4 in granulocytes upon calcium entry.</text>
</comment>
<comment type="PTM">
    <text evidence="2 6 7 10">Monoubiquitination of Lys-120 (H2AK119Ub) by RING1, TRIM37 and RNF2/RING2 complex gives a specific tag for epigenetic transcriptional repression and participates in X chromosome inactivation of female mammals. It is involved in the initiation of both imprinted and random X inactivation. Ubiquitinated H2A is enriched in inactive X chromosome chromatin. Ubiquitination of H2A functions downstream of methylation of 'Lys-27' of histone H3 (H3K27me). H2AK119Ub by RNF2/RING2 can also be induced by ultraviolet and may be involved in DNA repair. Following DNA double-strand breaks (DSBs), it is ubiquitinated through 'Lys-63' linkage of ubiquitin moieties by the E2 ligase UBE2N and the E3 ligases RNF8 and RNF168, leading to the recruitment of repair proteins to sites of DNA damage. Ubiquitination at Lys-14 and Lys-16 (H2AK13Ub and H2AK15Ub, respectively) in response to DNA damage is initiated by RNF168 that mediates monoubiquitination at these 2 sites, and 'Lys-63'-linked ubiquitin are then conjugated to monoubiquitin; RNF8 is able to extend 'Lys-63'-linked ubiquitin chains in vitro. Deubiquitinated by USP51 at Lys-14 and Lys-16 (H2AK13Ub and H2AK15Ub, respectively) after damaged DNA is repaired (By similarity). H2AK119Ub and ionizing radiation-induced 'Lys-63'-linked ubiquitination (H2AK13Ub and H2AK15Ub) are distinct events.</text>
</comment>
<comment type="PTM">
    <text evidence="2 13">Phosphorylation on Ser-2 (H2AS1ph) is enhanced during mitosis. Phosphorylation on Ser-2 by RPS6KA5/MSK1 directly represses transcription. Acetylation of H3 inhibits Ser-2 phosphorylation by RPS6KA5/MSK1. Phosphorylation at Thr-121 (H2AT120ph) by DCAF1 is present in the regulatory region of many tumor suppresor genes and down-regulates their transcription.</text>
</comment>
<comment type="PTM">
    <text evidence="8">Symmetric dimethylation on Arg-4 by the PRDM1/PRMT5 complex may play a crucial role in the germ-cell lineage.</text>
</comment>
<comment type="PTM">
    <text evidence="10">Glutamine methylation at Gln-105 (H2AQ104me) by FBL is specifically dedicated to polymerase I. It is present at 35S ribosomal DNA locus and impairs binding of the FACT complex.</text>
</comment>
<comment type="PTM">
    <text evidence="9">Crotonylation (Kcr) is specifically present in male germ cells and marks testis-specific genes in post-meiotic cells, including X-linked genes that escape sex chromosome inactivation in haploid cells. Crotonylation marks active promoters and enhancers and confers resistance to transcriptional repressors. It is also associated with post-meiotically activated genes on autosomes.</text>
</comment>
<comment type="PTM">
    <text evidence="12">Hydroxybutyrylation of histones is induced by starvation.</text>
</comment>
<comment type="PTM">
    <text evidence="1">Lactylated in macrophages by EP300/P300 by using lactoyl-CoA directly derived from endogenous or exogenous lactate, leading to stimulates gene transcription.</text>
</comment>
<comment type="similarity">
    <text evidence="14">Belongs to the histone H2A family.</text>
</comment>
<keyword id="KW-0007">Acetylation</keyword>
<keyword id="KW-0158">Chromosome</keyword>
<keyword id="KW-0164">Citrullination</keyword>
<keyword id="KW-0238">DNA-binding</keyword>
<keyword id="KW-0379">Hydroxylation</keyword>
<keyword id="KW-1017">Isopeptide bond</keyword>
<keyword id="KW-0488">Methylation</keyword>
<keyword id="KW-0544">Nucleosome core</keyword>
<keyword id="KW-0539">Nucleus</keyword>
<keyword id="KW-0597">Phosphoprotein</keyword>
<keyword id="KW-1185">Reference proteome</keyword>
<keyword id="KW-0832">Ubl conjugation</keyword>